<protein>
    <recommendedName>
        <fullName evidence="1">ATP synthase subunit a</fullName>
    </recommendedName>
    <alternativeName>
        <fullName evidence="1">ATP synthase F0 sector subunit a</fullName>
    </alternativeName>
    <alternativeName>
        <fullName evidence="1">F-ATPase subunit 6</fullName>
    </alternativeName>
</protein>
<sequence length="293" mass="32102">MAAPSGASPQSEYIQHHLVHLNNIGEKQSVIAQFNVINYDSLFWSILMGLLVVFCLWLAARRATAGVPGRFQGFIEMIVDMVDDQAKSIVTNAKSRLFVAPLALTVFLWIILMNALDLLPVDLLPSIWRMTGLGAEHGDPLYYHRILPTADLNVPMGMSLGVLLLMFYYGIKIKHPGGFVKELFTAPFHAHGLASLVLAPFNLLLNLIEYAAKSVSLGMRLFGNMFAGELIFMLIALLGGAWTGFNGASIGLGIGHVLAGSVWAIFHILIVLLQAFIFMMLTLVYIGQAHEGH</sequence>
<keyword id="KW-0066">ATP synthesis</keyword>
<keyword id="KW-0997">Cell inner membrane</keyword>
<keyword id="KW-1003">Cell membrane</keyword>
<keyword id="KW-0138">CF(0)</keyword>
<keyword id="KW-0375">Hydrogen ion transport</keyword>
<keyword id="KW-0406">Ion transport</keyword>
<keyword id="KW-0472">Membrane</keyword>
<keyword id="KW-1185">Reference proteome</keyword>
<keyword id="KW-0812">Transmembrane</keyword>
<keyword id="KW-1133">Transmembrane helix</keyword>
<keyword id="KW-0813">Transport</keyword>
<proteinExistence type="inferred from homology"/>
<accession>Q7VU50</accession>
<organism>
    <name type="scientific">Bordetella pertussis (strain Tohama I / ATCC BAA-589 / NCTC 13251)</name>
    <dbReference type="NCBI Taxonomy" id="257313"/>
    <lineage>
        <taxon>Bacteria</taxon>
        <taxon>Pseudomonadati</taxon>
        <taxon>Pseudomonadota</taxon>
        <taxon>Betaproteobacteria</taxon>
        <taxon>Burkholderiales</taxon>
        <taxon>Alcaligenaceae</taxon>
        <taxon>Bordetella</taxon>
    </lineage>
</organism>
<reference key="1">
    <citation type="journal article" date="2003" name="Nat. Genet.">
        <title>Comparative analysis of the genome sequences of Bordetella pertussis, Bordetella parapertussis and Bordetella bronchiseptica.</title>
        <authorList>
            <person name="Parkhill J."/>
            <person name="Sebaihia M."/>
            <person name="Preston A."/>
            <person name="Murphy L.D."/>
            <person name="Thomson N.R."/>
            <person name="Harris D.E."/>
            <person name="Holden M.T.G."/>
            <person name="Churcher C.M."/>
            <person name="Bentley S.D."/>
            <person name="Mungall K.L."/>
            <person name="Cerdeno-Tarraga A.-M."/>
            <person name="Temple L."/>
            <person name="James K.D."/>
            <person name="Harris B."/>
            <person name="Quail M.A."/>
            <person name="Achtman M."/>
            <person name="Atkin R."/>
            <person name="Baker S."/>
            <person name="Basham D."/>
            <person name="Bason N."/>
            <person name="Cherevach I."/>
            <person name="Chillingworth T."/>
            <person name="Collins M."/>
            <person name="Cronin A."/>
            <person name="Davis P."/>
            <person name="Doggett J."/>
            <person name="Feltwell T."/>
            <person name="Goble A."/>
            <person name="Hamlin N."/>
            <person name="Hauser H."/>
            <person name="Holroyd S."/>
            <person name="Jagels K."/>
            <person name="Leather S."/>
            <person name="Moule S."/>
            <person name="Norberczak H."/>
            <person name="O'Neil S."/>
            <person name="Ormond D."/>
            <person name="Price C."/>
            <person name="Rabbinowitsch E."/>
            <person name="Rutter S."/>
            <person name="Sanders M."/>
            <person name="Saunders D."/>
            <person name="Seeger K."/>
            <person name="Sharp S."/>
            <person name="Simmonds M."/>
            <person name="Skelton J."/>
            <person name="Squares R."/>
            <person name="Squares S."/>
            <person name="Stevens K."/>
            <person name="Unwin L."/>
            <person name="Whitehead S."/>
            <person name="Barrell B.G."/>
            <person name="Maskell D.J."/>
        </authorList>
    </citation>
    <scope>NUCLEOTIDE SEQUENCE [LARGE SCALE GENOMIC DNA]</scope>
    <source>
        <strain>Tohama I / ATCC BAA-589 / NCTC 13251</strain>
    </source>
</reference>
<gene>
    <name evidence="1" type="primary">atpB</name>
    <name type="ordered locus">BP3282</name>
</gene>
<dbReference type="EMBL" id="BX640421">
    <property type="protein sequence ID" value="CAE43547.1"/>
    <property type="molecule type" value="Genomic_DNA"/>
</dbReference>
<dbReference type="RefSeq" id="NP_881824.1">
    <property type="nucleotide sequence ID" value="NC_002929.2"/>
</dbReference>
<dbReference type="RefSeq" id="WP_003815364.1">
    <property type="nucleotide sequence ID" value="NZ_CP039022.1"/>
</dbReference>
<dbReference type="SMR" id="Q7VU50"/>
<dbReference type="STRING" id="257313.BP3282"/>
<dbReference type="PaxDb" id="257313-BP3282"/>
<dbReference type="GeneID" id="93205937"/>
<dbReference type="KEGG" id="bpe:BP3282"/>
<dbReference type="PATRIC" id="fig|257313.5.peg.3554"/>
<dbReference type="eggNOG" id="COG0356">
    <property type="taxonomic scope" value="Bacteria"/>
</dbReference>
<dbReference type="HOGENOM" id="CLU_041018_1_0_4"/>
<dbReference type="Proteomes" id="UP000002676">
    <property type="component" value="Chromosome"/>
</dbReference>
<dbReference type="GO" id="GO:0005886">
    <property type="term" value="C:plasma membrane"/>
    <property type="evidence" value="ECO:0007669"/>
    <property type="project" value="UniProtKB-SubCell"/>
</dbReference>
<dbReference type="GO" id="GO:0045259">
    <property type="term" value="C:proton-transporting ATP synthase complex"/>
    <property type="evidence" value="ECO:0007669"/>
    <property type="project" value="UniProtKB-KW"/>
</dbReference>
<dbReference type="GO" id="GO:0046933">
    <property type="term" value="F:proton-transporting ATP synthase activity, rotational mechanism"/>
    <property type="evidence" value="ECO:0007669"/>
    <property type="project" value="UniProtKB-UniRule"/>
</dbReference>
<dbReference type="GO" id="GO:0042777">
    <property type="term" value="P:proton motive force-driven plasma membrane ATP synthesis"/>
    <property type="evidence" value="ECO:0007669"/>
    <property type="project" value="TreeGrafter"/>
</dbReference>
<dbReference type="CDD" id="cd00310">
    <property type="entry name" value="ATP-synt_Fo_a_6"/>
    <property type="match status" value="1"/>
</dbReference>
<dbReference type="FunFam" id="1.20.120.220:FF:000002">
    <property type="entry name" value="ATP synthase subunit a"/>
    <property type="match status" value="1"/>
</dbReference>
<dbReference type="Gene3D" id="1.20.120.220">
    <property type="entry name" value="ATP synthase, F0 complex, subunit A"/>
    <property type="match status" value="1"/>
</dbReference>
<dbReference type="HAMAP" id="MF_01393">
    <property type="entry name" value="ATP_synth_a_bact"/>
    <property type="match status" value="1"/>
</dbReference>
<dbReference type="InterPro" id="IPR045082">
    <property type="entry name" value="ATP_syn_F0_a_bact/chloroplast"/>
</dbReference>
<dbReference type="InterPro" id="IPR000568">
    <property type="entry name" value="ATP_synth_F0_asu"/>
</dbReference>
<dbReference type="InterPro" id="IPR023011">
    <property type="entry name" value="ATP_synth_F0_asu_AS"/>
</dbReference>
<dbReference type="InterPro" id="IPR035908">
    <property type="entry name" value="F0_ATP_A_sf"/>
</dbReference>
<dbReference type="NCBIfam" id="TIGR01131">
    <property type="entry name" value="ATP_synt_6_or_A"/>
    <property type="match status" value="1"/>
</dbReference>
<dbReference type="NCBIfam" id="NF004477">
    <property type="entry name" value="PRK05815.1-1"/>
    <property type="match status" value="1"/>
</dbReference>
<dbReference type="PANTHER" id="PTHR42823">
    <property type="entry name" value="ATP SYNTHASE SUBUNIT A, CHLOROPLASTIC"/>
    <property type="match status" value="1"/>
</dbReference>
<dbReference type="PANTHER" id="PTHR42823:SF3">
    <property type="entry name" value="ATP SYNTHASE SUBUNIT A, CHLOROPLASTIC"/>
    <property type="match status" value="1"/>
</dbReference>
<dbReference type="Pfam" id="PF00119">
    <property type="entry name" value="ATP-synt_A"/>
    <property type="match status" value="1"/>
</dbReference>
<dbReference type="SUPFAM" id="SSF81336">
    <property type="entry name" value="F1F0 ATP synthase subunit A"/>
    <property type="match status" value="1"/>
</dbReference>
<dbReference type="PROSITE" id="PS00449">
    <property type="entry name" value="ATPASE_A"/>
    <property type="match status" value="1"/>
</dbReference>
<feature type="chain" id="PRO_1000145265" description="ATP synthase subunit a">
    <location>
        <begin position="1"/>
        <end position="293"/>
    </location>
</feature>
<feature type="transmembrane region" description="Helical" evidence="1">
    <location>
        <begin position="40"/>
        <end position="60"/>
    </location>
</feature>
<feature type="transmembrane region" description="Helical" evidence="1">
    <location>
        <begin position="97"/>
        <end position="117"/>
    </location>
</feature>
<feature type="transmembrane region" description="Helical" evidence="1">
    <location>
        <begin position="151"/>
        <end position="171"/>
    </location>
</feature>
<feature type="transmembrane region" description="Helical" evidence="1">
    <location>
        <begin position="188"/>
        <end position="208"/>
    </location>
</feature>
<feature type="transmembrane region" description="Helical" evidence="1">
    <location>
        <begin position="225"/>
        <end position="245"/>
    </location>
</feature>
<feature type="transmembrane region" description="Helical" evidence="1">
    <location>
        <begin position="264"/>
        <end position="284"/>
    </location>
</feature>
<evidence type="ECO:0000255" key="1">
    <source>
        <dbReference type="HAMAP-Rule" id="MF_01393"/>
    </source>
</evidence>
<name>ATP6_BORPE</name>
<comment type="function">
    <text evidence="1">Key component of the proton channel; it plays a direct role in the translocation of protons across the membrane.</text>
</comment>
<comment type="subunit">
    <text evidence="1">F-type ATPases have 2 components, CF(1) - the catalytic core - and CF(0) - the membrane proton channel. CF(1) has five subunits: alpha(3), beta(3), gamma(1), delta(1), epsilon(1). CF(0) has three main subunits: a(1), b(2) and c(9-12). The alpha and beta chains form an alternating ring which encloses part of the gamma chain. CF(1) is attached to CF(0) by a central stalk formed by the gamma and epsilon chains, while a peripheral stalk is formed by the delta and b chains.</text>
</comment>
<comment type="subcellular location">
    <subcellularLocation>
        <location evidence="1">Cell inner membrane</location>
        <topology evidence="1">Multi-pass membrane protein</topology>
    </subcellularLocation>
</comment>
<comment type="similarity">
    <text evidence="1">Belongs to the ATPase A chain family.</text>
</comment>